<feature type="initiator methionine" description="Removed" evidence="18">
    <location>
        <position position="1"/>
    </location>
</feature>
<feature type="chain" id="PRO_0000155210" description="Thymidylate kinase">
    <location>
        <begin position="2"/>
        <end position="212"/>
    </location>
</feature>
<feature type="region of interest" description="LID" evidence="9">
    <location>
        <begin position="133"/>
        <end position="157"/>
    </location>
</feature>
<feature type="binding site" evidence="1 11 12 14 16">
    <location>
        <begin position="16"/>
        <end position="21"/>
    </location>
    <ligand>
        <name>ATP</name>
        <dbReference type="ChEBI" id="CHEBI:30616"/>
    </ligand>
</feature>
<feature type="binding site" evidence="1 12 13 15">
    <location>
        <position position="97"/>
    </location>
    <ligand>
        <name>ATP</name>
        <dbReference type="ChEBI" id="CHEBI:30616"/>
    </ligand>
</feature>
<feature type="binding site" evidence="11 12 14 16">
    <location>
        <position position="182"/>
    </location>
    <ligand>
        <name>ATP</name>
        <dbReference type="ChEBI" id="CHEBI:30616"/>
    </ligand>
</feature>
<feature type="binding site" evidence="12 13 15 17">
    <location>
        <position position="192"/>
    </location>
    <ligand>
        <name>ATP</name>
        <dbReference type="ChEBI" id="CHEBI:30616"/>
    </ligand>
</feature>
<feature type="modified residue" description="N-acetylalanine" evidence="18">
    <location>
        <position position="2"/>
    </location>
</feature>
<feature type="modified residue" description="N6-acetyllysine" evidence="19">
    <location>
        <position position="169"/>
    </location>
</feature>
<feature type="splice variant" id="VSP_054164" description="In isoform 2." evidence="7">
    <location>
        <begin position="111"/>
        <end position="134"/>
    </location>
</feature>
<feature type="sequence variant" id="VAR_087114" description="In CONPM; loss of catalytic activity in patient fibroblasts; dbSNP:rs1267106442." evidence="5">
    <original>P</original>
    <variation>L</variation>
    <location>
        <position position="81"/>
    </location>
</feature>
<feature type="sequence variant" id="VAR_087115" description="In CONPM; uncertain significance; dbSNP:rs887888951." evidence="4">
    <original>A</original>
    <variation>T</variation>
    <location>
        <position position="99"/>
    </location>
</feature>
<feature type="sequence variant" id="VAR_087116" description="In CONPM; loss of catalytic activity in patient fibroblasts; dbSNP:rs373875797." evidence="5">
    <original>D</original>
    <variation>N</variation>
    <location>
        <position position="128"/>
    </location>
</feature>
<feature type="sequence conflict" description="In Ref. 3; CAG46783." evidence="8" ref="3">
    <original>A</original>
    <variation>P</variation>
    <location>
        <position position="3"/>
    </location>
</feature>
<feature type="sequence conflict" description="In Ref. 1; CAA38528." evidence="8" ref="1">
    <original>CAAGHRA</original>
    <variation>SRGPPP</variation>
    <location>
        <begin position="31"/>
        <end position="37"/>
    </location>
</feature>
<feature type="sequence conflict" description="In Ref. 2; AAA21719." evidence="8" ref="2">
    <original>Q</original>
    <variation>K</variation>
    <location>
        <position position="58"/>
    </location>
</feature>
<feature type="sequence conflict" description="In Ref. 3; CAG46783." evidence="8" ref="3">
    <original>V</original>
    <variation>A</variation>
    <location>
        <position position="68"/>
    </location>
</feature>
<feature type="sequence conflict" description="In Ref. 1; CAA38528." evidence="8" ref="1">
    <original>SI</original>
    <variation>RL</variation>
    <location>
        <begin position="183"/>
        <end position="184"/>
    </location>
</feature>
<feature type="sequence conflict" description="In Ref. 1; CAA38528 and 2; AAA21719." evidence="8" ref="1 2">
    <original>DI</original>
    <variation>EL</variation>
    <location>
        <begin position="190"/>
        <end position="191"/>
    </location>
</feature>
<feature type="strand" evidence="22">
    <location>
        <begin position="8"/>
        <end position="14"/>
    </location>
</feature>
<feature type="helix" evidence="22">
    <location>
        <begin position="19"/>
        <end position="32"/>
    </location>
</feature>
<feature type="strand" evidence="22">
    <location>
        <begin position="37"/>
        <end position="43"/>
    </location>
</feature>
<feature type="helix" evidence="22">
    <location>
        <begin position="48"/>
        <end position="57"/>
    </location>
</feature>
<feature type="helix" evidence="22">
    <location>
        <begin position="65"/>
        <end position="77"/>
    </location>
</feature>
<feature type="helix" evidence="22">
    <location>
        <begin position="80"/>
        <end position="88"/>
    </location>
</feature>
<feature type="strand" evidence="22">
    <location>
        <begin position="92"/>
        <end position="97"/>
    </location>
</feature>
<feature type="helix" evidence="22">
    <location>
        <begin position="99"/>
        <end position="107"/>
    </location>
</feature>
<feature type="helix" evidence="22">
    <location>
        <begin position="114"/>
        <end position="118"/>
    </location>
</feature>
<feature type="helix" evidence="22">
    <location>
        <begin position="119"/>
        <end position="121"/>
    </location>
</feature>
<feature type="strand" evidence="21">
    <location>
        <begin position="124"/>
        <end position="126"/>
    </location>
</feature>
<feature type="strand" evidence="22">
    <location>
        <begin position="128"/>
        <end position="134"/>
    </location>
</feature>
<feature type="helix" evidence="22">
    <location>
        <begin position="137"/>
        <end position="142"/>
    </location>
</feature>
<feature type="helix" evidence="23">
    <location>
        <begin position="149"/>
        <end position="151"/>
    </location>
</feature>
<feature type="helix" evidence="22">
    <location>
        <begin position="154"/>
        <end position="167"/>
    </location>
</feature>
<feature type="strand" evidence="20">
    <location>
        <begin position="171"/>
        <end position="173"/>
    </location>
</feature>
<feature type="strand" evidence="22">
    <location>
        <begin position="175"/>
        <end position="179"/>
    </location>
</feature>
<feature type="helix" evidence="22">
    <location>
        <begin position="184"/>
        <end position="201"/>
    </location>
</feature>
<feature type="helix" evidence="22">
    <location>
        <begin position="202"/>
        <end position="204"/>
    </location>
</feature>
<gene>
    <name type="primary">DTYMK</name>
    <name type="synonym">CDC8</name>
    <name type="synonym">TMPK</name>
    <name type="synonym">TYMK</name>
</gene>
<proteinExistence type="evidence at protein level"/>
<accession>P23919</accession>
<accession>B7ZW70</accession>
<accession>Q6FGX1</accession>
<accession>Q9BUX4</accession>
<evidence type="ECO:0000269" key="1">
    <source>
    </source>
</evidence>
<evidence type="ECO:0000269" key="2">
    <source>
    </source>
</evidence>
<evidence type="ECO:0000269" key="3">
    <source>
    </source>
</evidence>
<evidence type="ECO:0000269" key="4">
    <source>
    </source>
</evidence>
<evidence type="ECO:0000269" key="5">
    <source>
    </source>
</evidence>
<evidence type="ECO:0000269" key="6">
    <source>
    </source>
</evidence>
<evidence type="ECO:0000303" key="7">
    <source>
    </source>
</evidence>
<evidence type="ECO:0000305" key="8"/>
<evidence type="ECO:0000305" key="9">
    <source>
    </source>
</evidence>
<evidence type="ECO:0000305" key="10">
    <source>
    </source>
</evidence>
<evidence type="ECO:0007744" key="11">
    <source>
        <dbReference type="PDB" id="1NMX"/>
    </source>
</evidence>
<evidence type="ECO:0007744" key="12">
    <source>
        <dbReference type="PDB" id="1NMY"/>
    </source>
</evidence>
<evidence type="ECO:0007744" key="13">
    <source>
        <dbReference type="PDB" id="1NMZ"/>
    </source>
</evidence>
<evidence type="ECO:0007744" key="14">
    <source>
        <dbReference type="PDB" id="1NN0"/>
    </source>
</evidence>
<evidence type="ECO:0007744" key="15">
    <source>
        <dbReference type="PDB" id="1NN1"/>
    </source>
</evidence>
<evidence type="ECO:0007744" key="16">
    <source>
        <dbReference type="PDB" id="1NN3"/>
    </source>
</evidence>
<evidence type="ECO:0007744" key="17">
    <source>
        <dbReference type="PDB" id="1NN5"/>
    </source>
</evidence>
<evidence type="ECO:0007744" key="18">
    <source>
    </source>
</evidence>
<evidence type="ECO:0007744" key="19">
    <source>
    </source>
</evidence>
<evidence type="ECO:0007829" key="20">
    <source>
        <dbReference type="PDB" id="1E2E"/>
    </source>
</evidence>
<evidence type="ECO:0007829" key="21">
    <source>
        <dbReference type="PDB" id="1NN3"/>
    </source>
</evidence>
<evidence type="ECO:0007829" key="22">
    <source>
        <dbReference type="PDB" id="1NN5"/>
    </source>
</evidence>
<evidence type="ECO:0007829" key="23">
    <source>
        <dbReference type="PDB" id="2XX3"/>
    </source>
</evidence>
<keyword id="KW-0002">3D-structure</keyword>
<keyword id="KW-0007">Acetylation</keyword>
<keyword id="KW-0025">Alternative splicing</keyword>
<keyword id="KW-0067">ATP-binding</keyword>
<keyword id="KW-0225">Disease variant</keyword>
<keyword id="KW-0991">Intellectual disability</keyword>
<keyword id="KW-0418">Kinase</keyword>
<keyword id="KW-0523">Neurodegeneration</keyword>
<keyword id="KW-0545">Nucleotide biosynthesis</keyword>
<keyword id="KW-0547">Nucleotide-binding</keyword>
<keyword id="KW-1267">Proteomics identification</keyword>
<keyword id="KW-1185">Reference proteome</keyword>
<keyword id="KW-0808">Transferase</keyword>
<sequence length="212" mass="23819">MAARRGALIVLEGVDRAGKSTQSRKLVEALCAAGHRAELLRFPERSTEIGKLLSSYLQKKSDVEDHSVHLLFSANRWEQVPLIKEKLSQGVTLVVDRYAFSGVAFTGAKENFSLDWCKQPDVGLPKPDLVLFLQLQLADAAKRGAFGHERYENGAFQERALRCFHQLMKDTTLNWKMVDASKSIEAVHEDIRVLSEDAIRTATEKPLGELWK</sequence>
<dbReference type="EC" id="2.7.4.9" evidence="1 3 5 6 10"/>
<dbReference type="EMBL" id="X54729">
    <property type="protein sequence ID" value="CAA38528.1"/>
    <property type="molecule type" value="mRNA"/>
</dbReference>
<dbReference type="EMBL" id="L16991">
    <property type="protein sequence ID" value="AAA21719.1"/>
    <property type="molecule type" value="mRNA"/>
</dbReference>
<dbReference type="EMBL" id="CR541986">
    <property type="protein sequence ID" value="CAG46783.1"/>
    <property type="molecule type" value="mRNA"/>
</dbReference>
<dbReference type="EMBL" id="BC001827">
    <property type="protein sequence ID" value="AAH01827.1"/>
    <property type="molecule type" value="mRNA"/>
</dbReference>
<dbReference type="EMBL" id="BC171902">
    <property type="protein sequence ID" value="AAI71902.1"/>
    <property type="molecule type" value="mRNA"/>
</dbReference>
<dbReference type="CCDS" id="CCDS2552.1">
    <molecule id="P23919-1"/>
</dbReference>
<dbReference type="PIR" id="S26845">
    <property type="entry name" value="S26845"/>
</dbReference>
<dbReference type="RefSeq" id="NP_001158503.1">
    <molecule id="P23919-2"/>
    <property type="nucleotide sequence ID" value="NM_001165031.2"/>
</dbReference>
<dbReference type="RefSeq" id="NP_001307832.1">
    <property type="nucleotide sequence ID" value="NM_001320903.1"/>
</dbReference>
<dbReference type="RefSeq" id="NP_036277.2">
    <molecule id="P23919-1"/>
    <property type="nucleotide sequence ID" value="NM_012145.3"/>
</dbReference>
<dbReference type="PDB" id="1E2D">
    <property type="method" value="X-ray"/>
    <property type="resolution" value="1.65 A"/>
    <property type="chains" value="A=1-212"/>
</dbReference>
<dbReference type="PDB" id="1E2E">
    <property type="method" value="X-ray"/>
    <property type="resolution" value="2.00 A"/>
    <property type="chains" value="A=1-212"/>
</dbReference>
<dbReference type="PDB" id="1E2F">
    <property type="method" value="X-ray"/>
    <property type="resolution" value="1.60 A"/>
    <property type="chains" value="A=1-212"/>
</dbReference>
<dbReference type="PDB" id="1E2G">
    <property type="method" value="X-ray"/>
    <property type="resolution" value="1.70 A"/>
    <property type="chains" value="A=1-212"/>
</dbReference>
<dbReference type="PDB" id="1E2Q">
    <property type="method" value="X-ray"/>
    <property type="resolution" value="1.70 A"/>
    <property type="chains" value="A=1-212"/>
</dbReference>
<dbReference type="PDB" id="1E98">
    <property type="method" value="X-ray"/>
    <property type="resolution" value="1.90 A"/>
    <property type="chains" value="A=1-212"/>
</dbReference>
<dbReference type="PDB" id="1E99">
    <property type="method" value="X-ray"/>
    <property type="resolution" value="1.80 A"/>
    <property type="chains" value="A=1-212"/>
</dbReference>
<dbReference type="PDB" id="1E9A">
    <property type="method" value="X-ray"/>
    <property type="resolution" value="1.60 A"/>
    <property type="chains" value="A=1-212"/>
</dbReference>
<dbReference type="PDB" id="1E9B">
    <property type="method" value="X-ray"/>
    <property type="resolution" value="1.70 A"/>
    <property type="chains" value="A=1-212"/>
</dbReference>
<dbReference type="PDB" id="1E9C">
    <property type="method" value="X-ray"/>
    <property type="resolution" value="1.60 A"/>
    <property type="chains" value="A=1-212"/>
</dbReference>
<dbReference type="PDB" id="1E9D">
    <property type="method" value="X-ray"/>
    <property type="resolution" value="1.70 A"/>
    <property type="chains" value="A=1-212"/>
</dbReference>
<dbReference type="PDB" id="1E9E">
    <property type="method" value="X-ray"/>
    <property type="resolution" value="1.60 A"/>
    <property type="chains" value="A=1-212"/>
</dbReference>
<dbReference type="PDB" id="1E9F">
    <property type="method" value="X-ray"/>
    <property type="resolution" value="1.90 A"/>
    <property type="chains" value="A=1-144, A=149-212"/>
</dbReference>
<dbReference type="PDB" id="1NMX">
    <property type="method" value="X-ray"/>
    <property type="resolution" value="1.70 A"/>
    <property type="chains" value="A=1-212"/>
</dbReference>
<dbReference type="PDB" id="1NMY">
    <property type="method" value="X-ray"/>
    <property type="resolution" value="1.60 A"/>
    <property type="chains" value="A=4-212"/>
</dbReference>
<dbReference type="PDB" id="1NMZ">
    <property type="method" value="X-ray"/>
    <property type="resolution" value="1.75 A"/>
    <property type="chains" value="A=1-212"/>
</dbReference>
<dbReference type="PDB" id="1NN0">
    <property type="method" value="X-ray"/>
    <property type="resolution" value="1.60 A"/>
    <property type="chains" value="A=1-212"/>
</dbReference>
<dbReference type="PDB" id="1NN1">
    <property type="method" value="X-ray"/>
    <property type="resolution" value="1.90 A"/>
    <property type="chains" value="A=1-212"/>
</dbReference>
<dbReference type="PDB" id="1NN3">
    <property type="method" value="X-ray"/>
    <property type="resolution" value="1.55 A"/>
    <property type="chains" value="A=1-212"/>
</dbReference>
<dbReference type="PDB" id="1NN5">
    <property type="method" value="X-ray"/>
    <property type="resolution" value="1.50 A"/>
    <property type="chains" value="A=1-212"/>
</dbReference>
<dbReference type="PDB" id="2XX3">
    <property type="method" value="X-ray"/>
    <property type="resolution" value="2.00 A"/>
    <property type="chains" value="A=1-212"/>
</dbReference>
<dbReference type="PDBsum" id="1E2D"/>
<dbReference type="PDBsum" id="1E2E"/>
<dbReference type="PDBsum" id="1E2F"/>
<dbReference type="PDBsum" id="1E2G"/>
<dbReference type="PDBsum" id="1E2Q"/>
<dbReference type="PDBsum" id="1E98"/>
<dbReference type="PDBsum" id="1E99"/>
<dbReference type="PDBsum" id="1E9A"/>
<dbReference type="PDBsum" id="1E9B"/>
<dbReference type="PDBsum" id="1E9C"/>
<dbReference type="PDBsum" id="1E9D"/>
<dbReference type="PDBsum" id="1E9E"/>
<dbReference type="PDBsum" id="1E9F"/>
<dbReference type="PDBsum" id="1NMX"/>
<dbReference type="PDBsum" id="1NMY"/>
<dbReference type="PDBsum" id="1NMZ"/>
<dbReference type="PDBsum" id="1NN0"/>
<dbReference type="PDBsum" id="1NN1"/>
<dbReference type="PDBsum" id="1NN3"/>
<dbReference type="PDBsum" id="1NN5"/>
<dbReference type="PDBsum" id="2XX3"/>
<dbReference type="SMR" id="P23919"/>
<dbReference type="BioGRID" id="108174">
    <property type="interactions" value="71"/>
</dbReference>
<dbReference type="FunCoup" id="P23919">
    <property type="interactions" value="3201"/>
</dbReference>
<dbReference type="IntAct" id="P23919">
    <property type="interactions" value="23"/>
</dbReference>
<dbReference type="MINT" id="P23919"/>
<dbReference type="STRING" id="9606.ENSP00000304802"/>
<dbReference type="BindingDB" id="P23919"/>
<dbReference type="ChEMBL" id="CHEMBL4388"/>
<dbReference type="DrugBank" id="DB03150">
    <property type="generic name" value="2',3'-Dideoxythymidine-5'-Monophosphate"/>
</dbReference>
<dbReference type="DrugBank" id="DB03233">
    <property type="generic name" value="3'-deoxy-3'-aminothymidine monophosphate"/>
</dbReference>
<dbReference type="DrugBank" id="DB03195">
    <property type="generic name" value="3'-Fluoro-3'-deoxythymidine 5'-monophosphate"/>
</dbReference>
<dbReference type="DrugBank" id="DB03845">
    <property type="generic name" value="P1-(5'-Adenosyl)P5-(5'-(3'azido-3'-Deoxythymidyl))Pentaphosphate"/>
</dbReference>
<dbReference type="DrugBank" id="DB03280">
    <property type="generic name" value="p1-(5'-adenosyl)p5-(5'-thymidyl)pentaphosphate"/>
</dbReference>
<dbReference type="DrugBank" id="DB04395">
    <property type="generic name" value="Phosphoaminophosphonic Acid-Adenylate Ester"/>
</dbReference>
<dbReference type="DrugBank" id="DB01643">
    <property type="generic name" value="Thymidine monophosphate"/>
</dbReference>
<dbReference type="DrugBank" id="DB03666">
    <property type="generic name" value="Zidovudine monophosphate"/>
</dbReference>
<dbReference type="DrugCentral" id="P23919"/>
<dbReference type="GlyGen" id="P23919">
    <property type="glycosylation" value="1 site, 1 O-linked glycan (1 site)"/>
</dbReference>
<dbReference type="iPTMnet" id="P23919"/>
<dbReference type="PhosphoSitePlus" id="P23919"/>
<dbReference type="SwissPalm" id="P23919"/>
<dbReference type="BioMuta" id="DTYMK"/>
<dbReference type="DMDM" id="56405325"/>
<dbReference type="jPOST" id="P23919"/>
<dbReference type="MassIVE" id="P23919"/>
<dbReference type="PaxDb" id="9606-ENSP00000304802"/>
<dbReference type="PeptideAtlas" id="P23919"/>
<dbReference type="ProteomicsDB" id="54165">
    <molecule id="P23919-1"/>
</dbReference>
<dbReference type="Pumba" id="P23919"/>
<dbReference type="Antibodypedia" id="34572">
    <property type="antibodies" value="484 antibodies from 30 providers"/>
</dbReference>
<dbReference type="DNASU" id="1841"/>
<dbReference type="Ensembl" id="ENST00000305784.7">
    <molecule id="P23919-1"/>
    <property type="protein sequence ID" value="ENSP00000304802.2"/>
    <property type="gene ID" value="ENSG00000168393.13"/>
</dbReference>
<dbReference type="GeneID" id="1841"/>
<dbReference type="KEGG" id="hsa:1841"/>
<dbReference type="MANE-Select" id="ENST00000305784.7">
    <property type="protein sequence ID" value="ENSP00000304802.2"/>
    <property type="RefSeq nucleotide sequence ID" value="NM_012145.4"/>
    <property type="RefSeq protein sequence ID" value="NP_036277.2"/>
</dbReference>
<dbReference type="AGR" id="HGNC:3061"/>
<dbReference type="CTD" id="1841"/>
<dbReference type="DisGeNET" id="1841"/>
<dbReference type="GeneCards" id="DTYMK"/>
<dbReference type="HGNC" id="HGNC:3061">
    <property type="gene designation" value="DTYMK"/>
</dbReference>
<dbReference type="HPA" id="ENSG00000168393">
    <property type="expression patterns" value="Low tissue specificity"/>
</dbReference>
<dbReference type="MalaCards" id="DTYMK"/>
<dbReference type="MIM" id="188345">
    <property type="type" value="gene"/>
</dbReference>
<dbReference type="MIM" id="619847">
    <property type="type" value="phenotype"/>
</dbReference>
<dbReference type="neXtProt" id="NX_P23919"/>
<dbReference type="OpenTargets" id="ENSG00000168393"/>
<dbReference type="PharmGKB" id="PA150"/>
<dbReference type="VEuPathDB" id="HostDB:ENSG00000168393"/>
<dbReference type="eggNOG" id="KOG3327">
    <property type="taxonomic scope" value="Eukaryota"/>
</dbReference>
<dbReference type="GeneTree" id="ENSGT00940000154030"/>
<dbReference type="InParanoid" id="P23919"/>
<dbReference type="OMA" id="YWHQFDA"/>
<dbReference type="OrthoDB" id="425602at2759"/>
<dbReference type="PAN-GO" id="P23919">
    <property type="GO annotations" value="9 GO annotations based on evolutionary models"/>
</dbReference>
<dbReference type="PhylomeDB" id="P23919"/>
<dbReference type="TreeFam" id="TF324638"/>
<dbReference type="BioCyc" id="MetaCyc:HS11626-MONOMER"/>
<dbReference type="BRENDA" id="2.7.4.9">
    <property type="organism ID" value="2681"/>
</dbReference>
<dbReference type="PathwayCommons" id="P23919"/>
<dbReference type="Reactome" id="R-HSA-499943">
    <property type="pathway name" value="Interconversion of nucleotide di- and triphosphates"/>
</dbReference>
<dbReference type="SABIO-RK" id="P23919"/>
<dbReference type="SignaLink" id="P23919"/>
<dbReference type="SIGNOR" id="P23919"/>
<dbReference type="UniPathway" id="UPA00575"/>
<dbReference type="BioGRID-ORCS" id="1841">
    <property type="hits" value="809 hits in 1168 CRISPR screens"/>
</dbReference>
<dbReference type="EvolutionaryTrace" id="P23919"/>
<dbReference type="GeneWiki" id="DTYMK"/>
<dbReference type="GenomeRNAi" id="1841"/>
<dbReference type="Pharos" id="P23919">
    <property type="development level" value="Tbio"/>
</dbReference>
<dbReference type="PRO" id="PR:P23919"/>
<dbReference type="Proteomes" id="UP000005640">
    <property type="component" value="Chromosome 2"/>
</dbReference>
<dbReference type="RNAct" id="P23919">
    <property type="molecule type" value="protein"/>
</dbReference>
<dbReference type="Bgee" id="ENSG00000168393">
    <property type="expression patterns" value="Expressed in ventricular zone and 143 other cell types or tissues"/>
</dbReference>
<dbReference type="ExpressionAtlas" id="P23919">
    <property type="expression patterns" value="baseline and differential"/>
</dbReference>
<dbReference type="GO" id="GO:0005737">
    <property type="term" value="C:cytoplasm"/>
    <property type="evidence" value="ECO:0000318"/>
    <property type="project" value="GO_Central"/>
</dbReference>
<dbReference type="GO" id="GO:0005829">
    <property type="term" value="C:cytosol"/>
    <property type="evidence" value="ECO:0000304"/>
    <property type="project" value="Reactome"/>
</dbReference>
<dbReference type="GO" id="GO:0005739">
    <property type="term" value="C:mitochondrion"/>
    <property type="evidence" value="ECO:0006056"/>
    <property type="project" value="FlyBase"/>
</dbReference>
<dbReference type="GO" id="GO:0005634">
    <property type="term" value="C:nucleus"/>
    <property type="evidence" value="ECO:0000318"/>
    <property type="project" value="GO_Central"/>
</dbReference>
<dbReference type="GO" id="GO:0005524">
    <property type="term" value="F:ATP binding"/>
    <property type="evidence" value="ECO:0000314"/>
    <property type="project" value="UniProtKB"/>
</dbReference>
<dbReference type="GO" id="GO:0004798">
    <property type="term" value="F:dTMP kinase activity"/>
    <property type="evidence" value="ECO:0000314"/>
    <property type="project" value="UniProtKB"/>
</dbReference>
<dbReference type="GO" id="GO:0004550">
    <property type="term" value="F:nucleoside diphosphate kinase activity"/>
    <property type="evidence" value="ECO:0000318"/>
    <property type="project" value="GO_Central"/>
</dbReference>
<dbReference type="GO" id="GO:0071363">
    <property type="term" value="P:cellular response to growth factor stimulus"/>
    <property type="evidence" value="ECO:0007669"/>
    <property type="project" value="Ensembl"/>
</dbReference>
<dbReference type="GO" id="GO:0006233">
    <property type="term" value="P:dTDP biosynthetic process"/>
    <property type="evidence" value="ECO:0000314"/>
    <property type="project" value="UniProtKB"/>
</dbReference>
<dbReference type="GO" id="GO:0006235">
    <property type="term" value="P:dTTP biosynthetic process"/>
    <property type="evidence" value="ECO:0000318"/>
    <property type="project" value="GO_Central"/>
</dbReference>
<dbReference type="GO" id="GO:0006227">
    <property type="term" value="P:dUDP biosynthetic process"/>
    <property type="evidence" value="ECO:0000318"/>
    <property type="project" value="GO_Central"/>
</dbReference>
<dbReference type="GO" id="GO:0046105">
    <property type="term" value="P:thymidine biosynthetic process"/>
    <property type="evidence" value="ECO:0000314"/>
    <property type="project" value="UniProtKB"/>
</dbReference>
<dbReference type="CDD" id="cd01672">
    <property type="entry name" value="TMPK"/>
    <property type="match status" value="1"/>
</dbReference>
<dbReference type="FunFam" id="3.40.50.300:FF:000679">
    <property type="entry name" value="Thymidylate kinase"/>
    <property type="match status" value="1"/>
</dbReference>
<dbReference type="Gene3D" id="3.40.50.300">
    <property type="entry name" value="P-loop containing nucleotide triphosphate hydrolases"/>
    <property type="match status" value="1"/>
</dbReference>
<dbReference type="HAMAP" id="MF_00165">
    <property type="entry name" value="Thymidylate_kinase"/>
    <property type="match status" value="1"/>
</dbReference>
<dbReference type="InterPro" id="IPR027417">
    <property type="entry name" value="P-loop_NTPase"/>
</dbReference>
<dbReference type="InterPro" id="IPR039430">
    <property type="entry name" value="Thymidylate_kin-like_dom"/>
</dbReference>
<dbReference type="InterPro" id="IPR018095">
    <property type="entry name" value="Thymidylate_kin_CS"/>
</dbReference>
<dbReference type="InterPro" id="IPR018094">
    <property type="entry name" value="Thymidylate_kinase"/>
</dbReference>
<dbReference type="NCBIfam" id="TIGR00041">
    <property type="entry name" value="DTMP_kinase"/>
    <property type="match status" value="1"/>
</dbReference>
<dbReference type="PANTHER" id="PTHR10344">
    <property type="entry name" value="THYMIDYLATE KINASE"/>
    <property type="match status" value="1"/>
</dbReference>
<dbReference type="PANTHER" id="PTHR10344:SF1">
    <property type="entry name" value="THYMIDYLATE KINASE"/>
    <property type="match status" value="1"/>
</dbReference>
<dbReference type="Pfam" id="PF02223">
    <property type="entry name" value="Thymidylate_kin"/>
    <property type="match status" value="1"/>
</dbReference>
<dbReference type="SUPFAM" id="SSF52540">
    <property type="entry name" value="P-loop containing nucleoside triphosphate hydrolases"/>
    <property type="match status" value="1"/>
</dbReference>
<dbReference type="PROSITE" id="PS01331">
    <property type="entry name" value="THYMIDYLATE_KINASE"/>
    <property type="match status" value="1"/>
</dbReference>
<comment type="function">
    <text evidence="1 3 5 6 10">Catalyzes the phosphorylation of thymidine monophosphate (dTMP) to thymidine diphosphate (dTDP), the immediate precursor for the DNA building block dTTP, with ATP as the preferred phosphoryl donor in the presence of Mg(2+).</text>
</comment>
<comment type="catalytic activity">
    <reaction evidence="1 3 5 6 10">
        <text>dTMP + ATP = dTDP + ADP</text>
        <dbReference type="Rhea" id="RHEA:13517"/>
        <dbReference type="ChEBI" id="CHEBI:30616"/>
        <dbReference type="ChEBI" id="CHEBI:58369"/>
        <dbReference type="ChEBI" id="CHEBI:63528"/>
        <dbReference type="ChEBI" id="CHEBI:456216"/>
        <dbReference type="EC" id="2.7.4.9"/>
    </reaction>
</comment>
<comment type="cofactor">
    <cofactor evidence="2">
        <name>Mg(2+)</name>
        <dbReference type="ChEBI" id="CHEBI:18420"/>
    </cofactor>
</comment>
<comment type="biophysicochemical properties">
    <kinetics>
        <KM evidence="1">12 uM for AZTMP</KM>
        <KM evidence="1">5 uM for dTMP</KM>
    </kinetics>
</comment>
<comment type="pathway">
    <text evidence="2">Pyrimidine metabolism; dTTP biosynthesis.</text>
</comment>
<comment type="subunit">
    <text evidence="2">Homodimer.</text>
</comment>
<comment type="alternative products">
    <event type="alternative splicing"/>
    <isoform>
        <id>P23919-1</id>
        <name>1</name>
        <sequence type="displayed"/>
    </isoform>
    <isoform>
        <id>P23919-2</id>
        <name>2</name>
        <sequence type="described" ref="VSP_054164"/>
    </isoform>
</comment>
<comment type="developmental stage">
    <text evidence="6">The levels of dTMP kinase mRNA and its enzymatic activity fluctuate during the cell cycle, peaking at the S phase.</text>
</comment>
<comment type="disease" evidence="4 5">
    <disease id="DI-06403">
        <name>Neurodegeneration, childhood-onset, with progressive microcephaly</name>
        <acronym>CONPM</acronym>
        <description>An autosomal recessive disorder characterized by global developmental delay apparent from infancy. Most severely affected individuals have severe and progressive microcephaly, early-onset seizures, lack of visual tracking, and almost no developmental milestones, resulting in early death. Less severely affected individuals have a small head circumference and severely impaired intellectual development with poor speech and motor delay. Additional features may include poor overall growth, axial hypotonia, limb hypertonia with spasticity, undescended testes, and cerebral atrophy with neuronal loss.</description>
        <dbReference type="MIM" id="619847"/>
    </disease>
    <text>The disease is caused by variants affecting the gene represented in this entry.</text>
</comment>
<comment type="similarity">
    <text evidence="8">Belongs to the thymidylate kinase family.</text>
</comment>
<reference key="1">
    <citation type="journal article" date="1991" name="Nucleic Acids Res.">
        <title>Molecular cloning and expression of the human deoxythymidylate kinase gene in yeast.</title>
        <authorList>
            <person name="Su J.Y."/>
            <person name="Sclafani R.A."/>
        </authorList>
    </citation>
    <scope>NUCLEOTIDE SEQUENCE [MRNA] (ISOFORM 1)</scope>
    <scope>FUNCTION</scope>
    <scope>CATALYTIC ACTIVITY</scope>
</reference>
<reference key="2">
    <citation type="journal article" date="1994" name="DNA Cell Biol.">
        <title>Human dTMP kinase: gene expression and enzymatic activity coinciding with cell cycle progression and cell growth.</title>
        <authorList>
            <person name="Huang S.H."/>
            <person name="Tang A."/>
            <person name="Drisco B."/>
            <person name="Zhang S.Q."/>
            <person name="Seeger R."/>
            <person name="Li C."/>
            <person name="Jong A."/>
        </authorList>
    </citation>
    <scope>NUCLEOTIDE SEQUENCE [MRNA] (ISOFORM 1)</scope>
    <scope>FUNCTION</scope>
    <scope>CATALYTIC ACTIVITY</scope>
    <scope>DEVELOPMENTAL STAGE</scope>
</reference>
<reference key="3">
    <citation type="submission" date="2004-06" db="EMBL/GenBank/DDBJ databases">
        <title>Cloning of human full open reading frames in Gateway(TM) system entry vector (pDONR201).</title>
        <authorList>
            <person name="Halleck A."/>
            <person name="Ebert L."/>
            <person name="Mkoundinya M."/>
            <person name="Schick M."/>
            <person name="Eisenstein S."/>
            <person name="Neubert P."/>
            <person name="Kstrang K."/>
            <person name="Schatten R."/>
            <person name="Shen B."/>
            <person name="Henze S."/>
            <person name="Mar W."/>
            <person name="Korn B."/>
            <person name="Zuo D."/>
            <person name="Hu Y."/>
            <person name="LaBaer J."/>
        </authorList>
    </citation>
    <scope>NUCLEOTIDE SEQUENCE [LARGE SCALE MRNA] (ISOFORM 1)</scope>
</reference>
<reference key="4">
    <citation type="journal article" date="2004" name="Genome Res.">
        <title>The status, quality, and expansion of the NIH full-length cDNA project: the Mammalian Gene Collection (MGC).</title>
        <authorList>
            <consortium name="The MGC Project Team"/>
        </authorList>
    </citation>
    <scope>NUCLEOTIDE SEQUENCE [LARGE SCALE MRNA] (ISOFORMS 1 AND 2)</scope>
    <source>
        <tissue>Brain</tissue>
        <tissue>Muscle</tissue>
    </source>
</reference>
<reference key="5">
    <citation type="journal article" date="1977" name="J. Biol. Chem.">
        <title>Human thymidylate kinase. Purification, characterization, and kinetic behavior of the thymidylate kinase derived from chronic myelocytic leukemia.</title>
        <authorList>
            <person name="Lee L.S."/>
            <person name="Cheng Y."/>
        </authorList>
    </citation>
    <scope>FUNCTION</scope>
    <scope>CATALYTIC ACTIVITY</scope>
    <scope>SUBUNIT</scope>
    <scope>COFACTOR</scope>
    <scope>PATHWAY</scope>
</reference>
<reference key="6">
    <citation type="journal article" date="2009" name="Anal. Chem.">
        <title>Lys-N and trypsin cover complementary parts of the phosphoproteome in a refined SCX-based approach.</title>
        <authorList>
            <person name="Gauci S."/>
            <person name="Helbig A.O."/>
            <person name="Slijper M."/>
            <person name="Krijgsveld J."/>
            <person name="Heck A.J."/>
            <person name="Mohammed S."/>
        </authorList>
    </citation>
    <scope>ACETYLATION [LARGE SCALE ANALYSIS] AT ALA-2</scope>
    <scope>CLEAVAGE OF INITIATOR METHIONINE [LARGE SCALE ANALYSIS]</scope>
    <scope>IDENTIFICATION BY MASS SPECTROMETRY [LARGE SCALE ANALYSIS]</scope>
</reference>
<reference key="7">
    <citation type="journal article" date="2009" name="Science">
        <title>Lysine acetylation targets protein complexes and co-regulates major cellular functions.</title>
        <authorList>
            <person name="Choudhary C."/>
            <person name="Kumar C."/>
            <person name="Gnad F."/>
            <person name="Nielsen M.L."/>
            <person name="Rehman M."/>
            <person name="Walther T.C."/>
            <person name="Olsen J.V."/>
            <person name="Mann M."/>
        </authorList>
    </citation>
    <scope>ACETYLATION [LARGE SCALE ANALYSIS] AT LYS-169</scope>
    <scope>IDENTIFICATION BY MASS SPECTROMETRY [LARGE SCALE ANALYSIS]</scope>
</reference>
<reference key="8">
    <citation type="journal article" date="2011" name="BMC Syst. Biol.">
        <title>Initial characterization of the human central proteome.</title>
        <authorList>
            <person name="Burkard T.R."/>
            <person name="Planyavsky M."/>
            <person name="Kaupe I."/>
            <person name="Breitwieser F.P."/>
            <person name="Buerckstuemmer T."/>
            <person name="Bennett K.L."/>
            <person name="Superti-Furga G."/>
            <person name="Colinge J."/>
        </authorList>
    </citation>
    <scope>IDENTIFICATION BY MASS SPECTROMETRY [LARGE SCALE ANALYSIS]</scope>
</reference>
<reference key="9">
    <citation type="journal article" date="2014" name="J. Proteomics">
        <title>An enzyme assisted RP-RPLC approach for in-depth analysis of human liver phosphoproteome.</title>
        <authorList>
            <person name="Bian Y."/>
            <person name="Song C."/>
            <person name="Cheng K."/>
            <person name="Dong M."/>
            <person name="Wang F."/>
            <person name="Huang J."/>
            <person name="Sun D."/>
            <person name="Wang L."/>
            <person name="Ye M."/>
            <person name="Zou H."/>
        </authorList>
    </citation>
    <scope>IDENTIFICATION BY MASS SPECTROMETRY [LARGE SCALE ANALYSIS]</scope>
    <source>
        <tissue>Liver</tissue>
    </source>
</reference>
<reference key="10">
    <citation type="journal article" date="2015" name="Proteomics">
        <title>N-terminome analysis of the human mitochondrial proteome.</title>
        <authorList>
            <person name="Vaca Jacome A.S."/>
            <person name="Rabilloud T."/>
            <person name="Schaeffer-Reiss C."/>
            <person name="Rompais M."/>
            <person name="Ayoub D."/>
            <person name="Lane L."/>
            <person name="Bairoch A."/>
            <person name="Van Dorsselaer A."/>
            <person name="Carapito C."/>
        </authorList>
    </citation>
    <scope>IDENTIFICATION BY MASS SPECTROMETRY [LARGE SCALE ANALYSIS]</scope>
</reference>
<reference key="11">
    <citation type="journal article" date="2003" name="Biochemistry">
        <title>Structures of human thymidylate kinase in complex with prodrugs: implications for the structure-based design of novel compounds.</title>
        <authorList>
            <person name="Ostermann N."/>
            <person name="Segura-Pena D."/>
            <person name="Meier C."/>
            <person name="Veit T."/>
            <person name="Monnerjahn C."/>
            <person name="Konrad M."/>
            <person name="Lavie A."/>
        </authorList>
    </citation>
    <scope>X-RAY CRYSTALLOGRAPHY (1.65 ANGSTROMS) IN COMPLEX WITH ADP OR ATP ANALOG AND WITH THYMIDINE ANALOGS</scope>
    <scope>CATALYTIC ACTIVITY</scope>
    <scope>FUNCTION</scope>
    <scope>BIOPHYSICOCHEMICAL PROPERTIES</scope>
</reference>
<reference key="12">
    <citation type="journal article" date="2019" name="Clin. Chim. Acta">
        <title>Deoxythymidylate kinase, DTYMK, is a novel gene for mitochondrial DNA depletion syndrome.</title>
        <authorList>
            <person name="Lam C.W."/>
            <person name="Yeung W.L."/>
            <person name="Ling T.K."/>
            <person name="Wong K.C."/>
            <person name="Law C.Y."/>
        </authorList>
    </citation>
    <scope>INVOLVEMENT IN CONPM</scope>
    <scope>VARIANT CONPM THR-99</scope>
</reference>
<reference key="13">
    <citation type="journal article" date="2022" name="Acta Neuropathol.">
        <title>DTYMK is essential for genome integrity and neuronal survival.</title>
        <authorList>
            <person name="Vanoevelen J.M."/>
            <person name="Bierau J."/>
            <person name="Grashorn J.C."/>
            <person name="Lambrichs E."/>
            <person name="Kamsteeg E.J."/>
            <person name="Bok L.A."/>
            <person name="Wevers R.A."/>
            <person name="van der Knaap M.S."/>
            <person name="Bugiani M."/>
            <person name="Frisk J.H."/>
            <person name="Colnaghi R."/>
            <person name="O'Driscoll M."/>
            <person name="Hellebrekers D.M.E.I."/>
            <person name="Rodenburg R."/>
            <person name="Ferreira C.R."/>
            <person name="Brunner H.G."/>
            <person name="van den Wijngaard A."/>
            <person name="Abdel-Salam G.M.H."/>
            <person name="Wang L."/>
            <person name="Stumpel C.T.R.M."/>
        </authorList>
    </citation>
    <scope>INVOLVEMENT IN CONPM</scope>
    <scope>VARIANTS CONPM LEU-81 AND ASN-128</scope>
    <scope>FUNCTION</scope>
    <scope>CATALYTIC ACTIVITY</scope>
    <scope>CHARACTERIZATION OF VARIANTS CONPM LEU-81 AND ASN-128</scope>
</reference>
<organism>
    <name type="scientific">Homo sapiens</name>
    <name type="common">Human</name>
    <dbReference type="NCBI Taxonomy" id="9606"/>
    <lineage>
        <taxon>Eukaryota</taxon>
        <taxon>Metazoa</taxon>
        <taxon>Chordata</taxon>
        <taxon>Craniata</taxon>
        <taxon>Vertebrata</taxon>
        <taxon>Euteleostomi</taxon>
        <taxon>Mammalia</taxon>
        <taxon>Eutheria</taxon>
        <taxon>Euarchontoglires</taxon>
        <taxon>Primates</taxon>
        <taxon>Haplorrhini</taxon>
        <taxon>Catarrhini</taxon>
        <taxon>Hominidae</taxon>
        <taxon>Homo</taxon>
    </lineage>
</organism>
<name>KTHY_HUMAN</name>
<protein>
    <recommendedName>
        <fullName>Thymidylate kinase</fullName>
        <ecNumber evidence="1 3 5 6 10">2.7.4.9</ecNumber>
    </recommendedName>
    <alternativeName>
        <fullName>dTMP kinase</fullName>
    </alternativeName>
</protein>